<comment type="function">
    <text evidence="1">Methylates ribosomal protein L11.</text>
</comment>
<comment type="catalytic activity">
    <reaction evidence="1">
        <text>L-lysyl-[protein] + 3 S-adenosyl-L-methionine = N(6),N(6),N(6)-trimethyl-L-lysyl-[protein] + 3 S-adenosyl-L-homocysteine + 3 H(+)</text>
        <dbReference type="Rhea" id="RHEA:54192"/>
        <dbReference type="Rhea" id="RHEA-COMP:9752"/>
        <dbReference type="Rhea" id="RHEA-COMP:13826"/>
        <dbReference type="ChEBI" id="CHEBI:15378"/>
        <dbReference type="ChEBI" id="CHEBI:29969"/>
        <dbReference type="ChEBI" id="CHEBI:57856"/>
        <dbReference type="ChEBI" id="CHEBI:59789"/>
        <dbReference type="ChEBI" id="CHEBI:61961"/>
    </reaction>
</comment>
<comment type="subcellular location">
    <subcellularLocation>
        <location evidence="1">Cytoplasm</location>
    </subcellularLocation>
</comment>
<comment type="similarity">
    <text evidence="1">Belongs to the methyltransferase superfamily. PrmA family.</text>
</comment>
<comment type="sequence caution" evidence="2">
    <conflict type="erroneous initiation">
        <sequence resource="EMBL-CDS" id="CAH22813"/>
    </conflict>
</comment>
<organism>
    <name type="scientific">Yersinia pseudotuberculosis serotype I (strain IP32953)</name>
    <dbReference type="NCBI Taxonomy" id="273123"/>
    <lineage>
        <taxon>Bacteria</taxon>
        <taxon>Pseudomonadati</taxon>
        <taxon>Pseudomonadota</taxon>
        <taxon>Gammaproteobacteria</taxon>
        <taxon>Enterobacterales</taxon>
        <taxon>Yersiniaceae</taxon>
        <taxon>Yersinia</taxon>
    </lineage>
</organism>
<reference key="1">
    <citation type="journal article" date="2004" name="Proc. Natl. Acad. Sci. U.S.A.">
        <title>Insights into the evolution of Yersinia pestis through whole-genome comparison with Yersinia pseudotuberculosis.</title>
        <authorList>
            <person name="Chain P.S.G."/>
            <person name="Carniel E."/>
            <person name="Larimer F.W."/>
            <person name="Lamerdin J."/>
            <person name="Stoutland P.O."/>
            <person name="Regala W.M."/>
            <person name="Georgescu A.M."/>
            <person name="Vergez L.M."/>
            <person name="Land M.L."/>
            <person name="Motin V.L."/>
            <person name="Brubaker R.R."/>
            <person name="Fowler J."/>
            <person name="Hinnebusch J."/>
            <person name="Marceau M."/>
            <person name="Medigue C."/>
            <person name="Simonet M."/>
            <person name="Chenal-Francisque V."/>
            <person name="Souza B."/>
            <person name="Dacheux D."/>
            <person name="Elliott J.M."/>
            <person name="Derbise A."/>
            <person name="Hauser L.J."/>
            <person name="Garcia E."/>
        </authorList>
    </citation>
    <scope>NUCLEOTIDE SEQUENCE [LARGE SCALE GENOMIC DNA]</scope>
    <source>
        <strain>IP32953</strain>
    </source>
</reference>
<sequence>MPWIQLKLNTTGNQAESLGDVLVESGAVSVTFQDTHDNPVFEPLPGETRLWGDTDVIGLYDAETDMADVVAMLECHPQIGKGFIHKIEQLEDKDWEREWMDNFHPMRFGERLWICPSWRDVPDPTAVNVMLDPGLAFGTGTHPTTALCLQWLDSLDLNGKTLIDFGCGSGILAIAALKLGAARAIGIDIDPQAIQASRDNAQRNGVSERLELYLAKDQPAELSADVVVANILAGPLRELALLISVLPTTGGHLGLSGVLATQAAGVAQAYEDKFILDPVAEKEEWCRITGIKK</sequence>
<accession>Q665E3</accession>
<dbReference type="EC" id="2.1.1.-" evidence="1"/>
<dbReference type="EMBL" id="BX936398">
    <property type="protein sequence ID" value="CAH22813.1"/>
    <property type="status" value="ALT_INIT"/>
    <property type="molecule type" value="Genomic_DNA"/>
</dbReference>
<dbReference type="RefSeq" id="WP_011193166.1">
    <property type="nucleotide sequence ID" value="NC_006155.1"/>
</dbReference>
<dbReference type="SMR" id="Q665E3"/>
<dbReference type="KEGG" id="ypo:BZ17_3025"/>
<dbReference type="KEGG" id="yps:YPTB3575"/>
<dbReference type="PATRIC" id="fig|273123.14.peg.3168"/>
<dbReference type="Proteomes" id="UP000001011">
    <property type="component" value="Chromosome"/>
</dbReference>
<dbReference type="GO" id="GO:0005829">
    <property type="term" value="C:cytosol"/>
    <property type="evidence" value="ECO:0007669"/>
    <property type="project" value="TreeGrafter"/>
</dbReference>
<dbReference type="GO" id="GO:0016279">
    <property type="term" value="F:protein-lysine N-methyltransferase activity"/>
    <property type="evidence" value="ECO:0007669"/>
    <property type="project" value="TreeGrafter"/>
</dbReference>
<dbReference type="GO" id="GO:0032259">
    <property type="term" value="P:methylation"/>
    <property type="evidence" value="ECO:0007669"/>
    <property type="project" value="UniProtKB-KW"/>
</dbReference>
<dbReference type="CDD" id="cd02440">
    <property type="entry name" value="AdoMet_MTases"/>
    <property type="match status" value="1"/>
</dbReference>
<dbReference type="Gene3D" id="3.40.50.150">
    <property type="entry name" value="Vaccinia Virus protein VP39"/>
    <property type="match status" value="1"/>
</dbReference>
<dbReference type="HAMAP" id="MF_00735">
    <property type="entry name" value="Methyltr_PrmA"/>
    <property type="match status" value="1"/>
</dbReference>
<dbReference type="InterPro" id="IPR050078">
    <property type="entry name" value="Ribosomal_L11_MeTrfase_PrmA"/>
</dbReference>
<dbReference type="InterPro" id="IPR004498">
    <property type="entry name" value="Ribosomal_PrmA_MeTrfase"/>
</dbReference>
<dbReference type="InterPro" id="IPR029063">
    <property type="entry name" value="SAM-dependent_MTases_sf"/>
</dbReference>
<dbReference type="NCBIfam" id="TIGR00406">
    <property type="entry name" value="prmA"/>
    <property type="match status" value="1"/>
</dbReference>
<dbReference type="PANTHER" id="PTHR43648">
    <property type="entry name" value="ELECTRON TRANSFER FLAVOPROTEIN BETA SUBUNIT LYSINE METHYLTRANSFERASE"/>
    <property type="match status" value="1"/>
</dbReference>
<dbReference type="PANTHER" id="PTHR43648:SF1">
    <property type="entry name" value="ELECTRON TRANSFER FLAVOPROTEIN BETA SUBUNIT LYSINE METHYLTRANSFERASE"/>
    <property type="match status" value="1"/>
</dbReference>
<dbReference type="Pfam" id="PF06325">
    <property type="entry name" value="PrmA"/>
    <property type="match status" value="1"/>
</dbReference>
<dbReference type="PIRSF" id="PIRSF000401">
    <property type="entry name" value="RPL11_MTase"/>
    <property type="match status" value="1"/>
</dbReference>
<dbReference type="SUPFAM" id="SSF53335">
    <property type="entry name" value="S-adenosyl-L-methionine-dependent methyltransferases"/>
    <property type="match status" value="1"/>
</dbReference>
<gene>
    <name evidence="1" type="primary">prmA</name>
    <name type="ordered locus">YPTB3575</name>
</gene>
<name>PRMA_YERPS</name>
<keyword id="KW-0963">Cytoplasm</keyword>
<keyword id="KW-0489">Methyltransferase</keyword>
<keyword id="KW-0949">S-adenosyl-L-methionine</keyword>
<keyword id="KW-0808">Transferase</keyword>
<proteinExistence type="inferred from homology"/>
<evidence type="ECO:0000255" key="1">
    <source>
        <dbReference type="HAMAP-Rule" id="MF_00735"/>
    </source>
</evidence>
<evidence type="ECO:0000305" key="2"/>
<feature type="chain" id="PRO_0000192340" description="Ribosomal protein L11 methyltransferase">
    <location>
        <begin position="1"/>
        <end position="293"/>
    </location>
</feature>
<feature type="binding site" evidence="1">
    <location>
        <position position="145"/>
    </location>
    <ligand>
        <name>S-adenosyl-L-methionine</name>
        <dbReference type="ChEBI" id="CHEBI:59789"/>
    </ligand>
</feature>
<feature type="binding site" evidence="1">
    <location>
        <position position="166"/>
    </location>
    <ligand>
        <name>S-adenosyl-L-methionine</name>
        <dbReference type="ChEBI" id="CHEBI:59789"/>
    </ligand>
</feature>
<feature type="binding site" evidence="1">
    <location>
        <position position="188"/>
    </location>
    <ligand>
        <name>S-adenosyl-L-methionine</name>
        <dbReference type="ChEBI" id="CHEBI:59789"/>
    </ligand>
</feature>
<feature type="binding site" evidence="1">
    <location>
        <position position="230"/>
    </location>
    <ligand>
        <name>S-adenosyl-L-methionine</name>
        <dbReference type="ChEBI" id="CHEBI:59789"/>
    </ligand>
</feature>
<protein>
    <recommendedName>
        <fullName evidence="1">Ribosomal protein L11 methyltransferase</fullName>
        <shortName evidence="1">L11 Mtase</shortName>
        <ecNumber evidence="1">2.1.1.-</ecNumber>
    </recommendedName>
</protein>